<dbReference type="EC" id="4.3.2.1" evidence="1"/>
<dbReference type="EMBL" id="CP000253">
    <property type="protein sequence ID" value="ABD30023.1"/>
    <property type="molecule type" value="Genomic_DNA"/>
</dbReference>
<dbReference type="RefSeq" id="WP_000066053.1">
    <property type="nucleotide sequence ID" value="NZ_LS483365.1"/>
</dbReference>
<dbReference type="RefSeq" id="YP_499451.1">
    <property type="nucleotide sequence ID" value="NC_007795.1"/>
</dbReference>
<dbReference type="SMR" id="Q2FZU2"/>
<dbReference type="STRING" id="93061.SAOUHSC_00898"/>
<dbReference type="PaxDb" id="1280-SAXN108_0955"/>
<dbReference type="GeneID" id="3921744"/>
<dbReference type="KEGG" id="sao:SAOUHSC_00898"/>
<dbReference type="PATRIC" id="fig|93061.5.peg.819"/>
<dbReference type="eggNOG" id="COG0165">
    <property type="taxonomic scope" value="Bacteria"/>
</dbReference>
<dbReference type="HOGENOM" id="CLU_027272_2_3_9"/>
<dbReference type="OrthoDB" id="9769623at2"/>
<dbReference type="UniPathway" id="UPA00068">
    <property type="reaction ID" value="UER00114"/>
</dbReference>
<dbReference type="Proteomes" id="UP000008816">
    <property type="component" value="Chromosome"/>
</dbReference>
<dbReference type="GO" id="GO:0005829">
    <property type="term" value="C:cytosol"/>
    <property type="evidence" value="ECO:0000318"/>
    <property type="project" value="GO_Central"/>
</dbReference>
<dbReference type="GO" id="GO:0004056">
    <property type="term" value="F:argininosuccinate lyase activity"/>
    <property type="evidence" value="ECO:0000318"/>
    <property type="project" value="GO_Central"/>
</dbReference>
<dbReference type="GO" id="GO:0042450">
    <property type="term" value="P:arginine biosynthetic process via ornithine"/>
    <property type="evidence" value="ECO:0000318"/>
    <property type="project" value="GO_Central"/>
</dbReference>
<dbReference type="GO" id="GO:0006526">
    <property type="term" value="P:L-arginine biosynthetic process"/>
    <property type="evidence" value="ECO:0007669"/>
    <property type="project" value="UniProtKB-UniRule"/>
</dbReference>
<dbReference type="CDD" id="cd01359">
    <property type="entry name" value="Argininosuccinate_lyase"/>
    <property type="match status" value="1"/>
</dbReference>
<dbReference type="FunFam" id="1.10.275.10:FF:000002">
    <property type="entry name" value="Argininosuccinate lyase"/>
    <property type="match status" value="1"/>
</dbReference>
<dbReference type="FunFam" id="1.10.40.30:FF:000001">
    <property type="entry name" value="Argininosuccinate lyase"/>
    <property type="match status" value="1"/>
</dbReference>
<dbReference type="FunFam" id="1.20.200.10:FF:000006">
    <property type="entry name" value="Argininosuccinate lyase"/>
    <property type="match status" value="1"/>
</dbReference>
<dbReference type="Gene3D" id="1.10.40.30">
    <property type="entry name" value="Fumarase/aspartase (C-terminal domain)"/>
    <property type="match status" value="1"/>
</dbReference>
<dbReference type="Gene3D" id="1.20.200.10">
    <property type="entry name" value="Fumarase/aspartase (Central domain)"/>
    <property type="match status" value="1"/>
</dbReference>
<dbReference type="Gene3D" id="1.10.275.10">
    <property type="entry name" value="Fumarase/aspartase (N-terminal domain)"/>
    <property type="match status" value="1"/>
</dbReference>
<dbReference type="HAMAP" id="MF_00006">
    <property type="entry name" value="Arg_succ_lyase"/>
    <property type="match status" value="1"/>
</dbReference>
<dbReference type="InterPro" id="IPR029419">
    <property type="entry name" value="Arg_succ_lyase_C"/>
</dbReference>
<dbReference type="InterPro" id="IPR009049">
    <property type="entry name" value="Argininosuccinate_lyase"/>
</dbReference>
<dbReference type="InterPro" id="IPR024083">
    <property type="entry name" value="Fumarase/histidase_N"/>
</dbReference>
<dbReference type="InterPro" id="IPR020557">
    <property type="entry name" value="Fumarate_lyase_CS"/>
</dbReference>
<dbReference type="InterPro" id="IPR000362">
    <property type="entry name" value="Fumarate_lyase_fam"/>
</dbReference>
<dbReference type="InterPro" id="IPR022761">
    <property type="entry name" value="Fumarate_lyase_N"/>
</dbReference>
<dbReference type="InterPro" id="IPR008948">
    <property type="entry name" value="L-Aspartase-like"/>
</dbReference>
<dbReference type="NCBIfam" id="TIGR00838">
    <property type="entry name" value="argH"/>
    <property type="match status" value="1"/>
</dbReference>
<dbReference type="PANTHER" id="PTHR43814">
    <property type="entry name" value="ARGININOSUCCINATE LYASE"/>
    <property type="match status" value="1"/>
</dbReference>
<dbReference type="PANTHER" id="PTHR43814:SF1">
    <property type="entry name" value="ARGININOSUCCINATE LYASE"/>
    <property type="match status" value="1"/>
</dbReference>
<dbReference type="Pfam" id="PF14698">
    <property type="entry name" value="ASL_C2"/>
    <property type="match status" value="1"/>
</dbReference>
<dbReference type="Pfam" id="PF00206">
    <property type="entry name" value="Lyase_1"/>
    <property type="match status" value="1"/>
</dbReference>
<dbReference type="PRINTS" id="PR00145">
    <property type="entry name" value="ARGSUCLYASE"/>
</dbReference>
<dbReference type="PRINTS" id="PR00149">
    <property type="entry name" value="FUMRATELYASE"/>
</dbReference>
<dbReference type="SUPFAM" id="SSF48557">
    <property type="entry name" value="L-aspartase-like"/>
    <property type="match status" value="1"/>
</dbReference>
<dbReference type="PROSITE" id="PS00163">
    <property type="entry name" value="FUMARATE_LYASES"/>
    <property type="match status" value="1"/>
</dbReference>
<evidence type="ECO:0000255" key="1">
    <source>
        <dbReference type="HAMAP-Rule" id="MF_00006"/>
    </source>
</evidence>
<sequence>MSNKAWGGRFEVQPEEWVDDFNASITFDQTLIDQDIEGSIAHATMLANQGIISQQDSEQIIQGLKSIQHDYHQDQIQFSASLEDIHLNIEHELIKRIGDAGGKLHTGRSRNDQVATDMHLYTKKQVQDIIALIKSLQSVIVDIASNNVDTIMPGYTHLQRAQPISFAHHIMTYFWMLQRDQQRFEDSLKRIDINPLGAAALSGTTYPIDRHETTALLNFGSLYENSLDAVSDRDYIIETLHNISLTMVHLSRFAEEIIFWSTDEAKFITLSDAFSTGSSIMPQKKNPDMAELIRGKVGRTTGHLMSMLMTLKGLPLAYNKDMQEDKEGLFDAVHTIKGSLRIFEGMIQTMTINKERLNQTVKEDFSNATELADYLVTKNIPFRTAHEIVGKIVLECIQQGHYLLDVPLATYQQHHSSIDADIYDYLQPENCLKRRQSYGSTGQSSVKQQLDVAKQLLSQ</sequence>
<accession>Q2FZU2</accession>
<name>ARLY_STAA8</name>
<comment type="catalytic activity">
    <reaction evidence="1">
        <text>2-(N(omega)-L-arginino)succinate = fumarate + L-arginine</text>
        <dbReference type="Rhea" id="RHEA:24020"/>
        <dbReference type="ChEBI" id="CHEBI:29806"/>
        <dbReference type="ChEBI" id="CHEBI:32682"/>
        <dbReference type="ChEBI" id="CHEBI:57472"/>
        <dbReference type="EC" id="4.3.2.1"/>
    </reaction>
</comment>
<comment type="pathway">
    <text evidence="1">Amino-acid biosynthesis; L-arginine biosynthesis; L-arginine from L-ornithine and carbamoyl phosphate: step 3/3.</text>
</comment>
<comment type="subcellular location">
    <subcellularLocation>
        <location evidence="1">Cytoplasm</location>
    </subcellularLocation>
</comment>
<comment type="similarity">
    <text evidence="1">Belongs to the lyase 1 family. Argininosuccinate lyase subfamily.</text>
</comment>
<protein>
    <recommendedName>
        <fullName evidence="1">Argininosuccinate lyase</fullName>
        <shortName evidence="1">ASAL</shortName>
        <ecNumber evidence="1">4.3.2.1</ecNumber>
    </recommendedName>
    <alternativeName>
        <fullName evidence="1">Arginosuccinase</fullName>
    </alternativeName>
</protein>
<feature type="chain" id="PRO_1000000547" description="Argininosuccinate lyase">
    <location>
        <begin position="1"/>
        <end position="459"/>
    </location>
</feature>
<organism>
    <name type="scientific">Staphylococcus aureus (strain NCTC 8325 / PS 47)</name>
    <dbReference type="NCBI Taxonomy" id="93061"/>
    <lineage>
        <taxon>Bacteria</taxon>
        <taxon>Bacillati</taxon>
        <taxon>Bacillota</taxon>
        <taxon>Bacilli</taxon>
        <taxon>Bacillales</taxon>
        <taxon>Staphylococcaceae</taxon>
        <taxon>Staphylococcus</taxon>
    </lineage>
</organism>
<reference key="1">
    <citation type="book" date="2006" name="Gram positive pathogens, 2nd edition">
        <title>The Staphylococcus aureus NCTC 8325 genome.</title>
        <editorList>
            <person name="Fischetti V."/>
            <person name="Novick R."/>
            <person name="Ferretti J."/>
            <person name="Portnoy D."/>
            <person name="Rood J."/>
        </editorList>
        <authorList>
            <person name="Gillaspy A.F."/>
            <person name="Worrell V."/>
            <person name="Orvis J."/>
            <person name="Roe B.A."/>
            <person name="Dyer D.W."/>
            <person name="Iandolo J.J."/>
        </authorList>
    </citation>
    <scope>NUCLEOTIDE SEQUENCE [LARGE SCALE GENOMIC DNA]</scope>
    <source>
        <strain>NCTC 8325 / PS 47</strain>
    </source>
</reference>
<keyword id="KW-0028">Amino-acid biosynthesis</keyword>
<keyword id="KW-0055">Arginine biosynthesis</keyword>
<keyword id="KW-0963">Cytoplasm</keyword>
<keyword id="KW-0456">Lyase</keyword>
<keyword id="KW-1185">Reference proteome</keyword>
<gene>
    <name evidence="1" type="primary">argH</name>
    <name type="ordered locus">SAOUHSC_00898</name>
</gene>
<proteinExistence type="inferred from homology"/>